<reference key="1">
    <citation type="journal article" date="1997" name="Biochem. Biophys. Res. Commun.">
        <title>Isolation, characterization, and mapping of two human potassium channels.</title>
        <authorList>
            <person name="Su K."/>
            <person name="Kyaw H."/>
            <person name="Fan P."/>
            <person name="Zeng Z."/>
            <person name="Shell B.K."/>
            <person name="Carter K.C."/>
            <person name="Li Y."/>
        </authorList>
    </citation>
    <scope>NUCLEOTIDE SEQUENCE [MRNA]</scope>
    <source>
        <tissue>Fetal brain</tissue>
    </source>
</reference>
<reference key="2">
    <citation type="submission" date="1997-10" db="EMBL/GenBank/DDBJ databases">
        <authorList>
            <person name="Chen J."/>
            <person name="Ptacek J.L."/>
        </authorList>
    </citation>
    <scope>NUCLEOTIDE SEQUENCE [MRNA]</scope>
</reference>
<reference key="3">
    <citation type="journal article" date="2005" name="Nature">
        <title>Generation and annotation of the DNA sequences of human chromosomes 2 and 4.</title>
        <authorList>
            <person name="Hillier L.W."/>
            <person name="Graves T.A."/>
            <person name="Fulton R.S."/>
            <person name="Fulton L.A."/>
            <person name="Pepin K.H."/>
            <person name="Minx P."/>
            <person name="Wagner-McPherson C."/>
            <person name="Layman D."/>
            <person name="Wylie K."/>
            <person name="Sekhon M."/>
            <person name="Becker M.C."/>
            <person name="Fewell G.A."/>
            <person name="Delehaunty K.D."/>
            <person name="Miner T.L."/>
            <person name="Nash W.E."/>
            <person name="Kremitzki C."/>
            <person name="Oddy L."/>
            <person name="Du H."/>
            <person name="Sun H."/>
            <person name="Bradshaw-Cordum H."/>
            <person name="Ali J."/>
            <person name="Carter J."/>
            <person name="Cordes M."/>
            <person name="Harris A."/>
            <person name="Isak A."/>
            <person name="van Brunt A."/>
            <person name="Nguyen C."/>
            <person name="Du F."/>
            <person name="Courtney L."/>
            <person name="Kalicki J."/>
            <person name="Ozersky P."/>
            <person name="Abbott S."/>
            <person name="Armstrong J."/>
            <person name="Belter E.A."/>
            <person name="Caruso L."/>
            <person name="Cedroni M."/>
            <person name="Cotton M."/>
            <person name="Davidson T."/>
            <person name="Desai A."/>
            <person name="Elliott G."/>
            <person name="Erb T."/>
            <person name="Fronick C."/>
            <person name="Gaige T."/>
            <person name="Haakenson W."/>
            <person name="Haglund K."/>
            <person name="Holmes A."/>
            <person name="Harkins R."/>
            <person name="Kim K."/>
            <person name="Kruchowski S.S."/>
            <person name="Strong C.M."/>
            <person name="Grewal N."/>
            <person name="Goyea E."/>
            <person name="Hou S."/>
            <person name="Levy A."/>
            <person name="Martinka S."/>
            <person name="Mead K."/>
            <person name="McLellan M.D."/>
            <person name="Meyer R."/>
            <person name="Randall-Maher J."/>
            <person name="Tomlinson C."/>
            <person name="Dauphin-Kohlberg S."/>
            <person name="Kozlowicz-Reilly A."/>
            <person name="Shah N."/>
            <person name="Swearengen-Shahid S."/>
            <person name="Snider J."/>
            <person name="Strong J.T."/>
            <person name="Thompson J."/>
            <person name="Yoakum M."/>
            <person name="Leonard S."/>
            <person name="Pearman C."/>
            <person name="Trani L."/>
            <person name="Radionenko M."/>
            <person name="Waligorski J.E."/>
            <person name="Wang C."/>
            <person name="Rock S.M."/>
            <person name="Tin-Wollam A.-M."/>
            <person name="Maupin R."/>
            <person name="Latreille P."/>
            <person name="Wendl M.C."/>
            <person name="Yang S.-P."/>
            <person name="Pohl C."/>
            <person name="Wallis J.W."/>
            <person name="Spieth J."/>
            <person name="Bieri T.A."/>
            <person name="Berkowicz N."/>
            <person name="Nelson J.O."/>
            <person name="Osborne J."/>
            <person name="Ding L."/>
            <person name="Meyer R."/>
            <person name="Sabo A."/>
            <person name="Shotland Y."/>
            <person name="Sinha P."/>
            <person name="Wohldmann P.E."/>
            <person name="Cook L.L."/>
            <person name="Hickenbotham M.T."/>
            <person name="Eldred J."/>
            <person name="Williams D."/>
            <person name="Jones T.A."/>
            <person name="She X."/>
            <person name="Ciccarelli F.D."/>
            <person name="Izaurralde E."/>
            <person name="Taylor J."/>
            <person name="Schmutz J."/>
            <person name="Myers R.M."/>
            <person name="Cox D.R."/>
            <person name="Huang X."/>
            <person name="McPherson J.D."/>
            <person name="Mardis E.R."/>
            <person name="Clifton S.W."/>
            <person name="Warren W.C."/>
            <person name="Chinwalla A.T."/>
            <person name="Eddy S.R."/>
            <person name="Marra M.A."/>
            <person name="Ovcharenko I."/>
            <person name="Furey T.S."/>
            <person name="Miller W."/>
            <person name="Eichler E.E."/>
            <person name="Bork P."/>
            <person name="Suyama M."/>
            <person name="Torrents D."/>
            <person name="Waterston R.H."/>
            <person name="Wilson R.K."/>
        </authorList>
    </citation>
    <scope>NUCLEOTIDE SEQUENCE [LARGE SCALE GENOMIC DNA]</scope>
</reference>
<reference key="4">
    <citation type="submission" date="2005-07" db="EMBL/GenBank/DDBJ databases">
        <authorList>
            <person name="Mural R.J."/>
            <person name="Istrail S."/>
            <person name="Sutton G.G."/>
            <person name="Florea L."/>
            <person name="Halpern A.L."/>
            <person name="Mobarry C.M."/>
            <person name="Lippert R."/>
            <person name="Walenz B."/>
            <person name="Shatkay H."/>
            <person name="Dew I."/>
            <person name="Miller J.R."/>
            <person name="Flanigan M.J."/>
            <person name="Edwards N.J."/>
            <person name="Bolanos R."/>
            <person name="Fasulo D."/>
            <person name="Halldorsson B.V."/>
            <person name="Hannenhalli S."/>
            <person name="Turner R."/>
            <person name="Yooseph S."/>
            <person name="Lu F."/>
            <person name="Nusskern D.R."/>
            <person name="Shue B.C."/>
            <person name="Zheng X.H."/>
            <person name="Zhong F."/>
            <person name="Delcher A.L."/>
            <person name="Huson D.H."/>
            <person name="Kravitz S.A."/>
            <person name="Mouchard L."/>
            <person name="Reinert K."/>
            <person name="Remington K.A."/>
            <person name="Clark A.G."/>
            <person name="Waterman M.S."/>
            <person name="Eichler E.E."/>
            <person name="Adams M.D."/>
            <person name="Hunkapiller M.W."/>
            <person name="Myers E.W."/>
            <person name="Venter J.C."/>
        </authorList>
    </citation>
    <scope>NUCLEOTIDE SEQUENCE [LARGE SCALE GENOMIC DNA]</scope>
</reference>
<reference key="5">
    <citation type="journal article" date="2004" name="Genome Res.">
        <title>The status, quality, and expansion of the NIH full-length cDNA project: the Mammalian Gene Collection (MGC).</title>
        <authorList>
            <consortium name="The MGC Project Team"/>
        </authorList>
    </citation>
    <scope>NUCLEOTIDE SEQUENCE [LARGE SCALE MRNA]</scope>
    <source>
        <tissue>Hypothalamus</tissue>
    </source>
</reference>
<gene>
    <name evidence="7" type="primary">KCNF1</name>
</gene>
<sequence>MDGSGERSLPEPGSQSSAASDDIEIVVNVGGVRQVLYGDLLSQYPETRLAELINCLAGGYDTIFSLCDDYDPGKREFYFDRDPDAFKCVIEVYYFGEVHMKKGICPICFKNEMDFWKVDLKFLDDCCKSHLSEKREELEEIARRVQLILDDLGVDAAEGRWRRCQKCVWKFLEKPESSCPARVVAVLSFLLILVSSVVMCMGTIPELQVLDAEGNRVEHPTLENVETACIGWFTLEYLLRLFSSPNKLHFALSFMNIVDVLAILPFYVSLTLTHLGARMMELTNVQQAVQALRIMRIARIFKLARHSSGLQTLTYALKRSFKELGLLLMYLAVGIFVFSALGYTMEQSHPETLFKSIPQSFWWAIITMTTVGYGDIYPKTTLGKLNAAISFLCGVIAIALPIHPIINNFVRYYNKQRVLETAAKHELELMELNSSSGGEGKTGGSRSDLDNLPPEPAGKEAPSCSSRLKLSHSDTFIPLLTEEKHHRTRLQSCK</sequence>
<dbReference type="EMBL" id="AF033382">
    <property type="protein sequence ID" value="AAC05597.1"/>
    <property type="molecule type" value="mRNA"/>
</dbReference>
<dbReference type="EMBL" id="AF029780">
    <property type="protein sequence ID" value="AAG43055.1"/>
    <property type="molecule type" value="mRNA"/>
</dbReference>
<dbReference type="EMBL" id="AC019041">
    <property type="protein sequence ID" value="AAX81991.1"/>
    <property type="molecule type" value="Genomic_DNA"/>
</dbReference>
<dbReference type="EMBL" id="CH471053">
    <property type="protein sequence ID" value="EAX00946.1"/>
    <property type="molecule type" value="Genomic_DNA"/>
</dbReference>
<dbReference type="EMBL" id="BC026110">
    <property type="protein sequence ID" value="AAH26110.1"/>
    <property type="molecule type" value="mRNA"/>
</dbReference>
<dbReference type="CCDS" id="CCDS1676.1"/>
<dbReference type="PIR" id="JC5919">
    <property type="entry name" value="JC5919"/>
</dbReference>
<dbReference type="RefSeq" id="NP_002227.2">
    <property type="nucleotide sequence ID" value="NM_002236.4"/>
</dbReference>
<dbReference type="SMR" id="Q9H3M0"/>
<dbReference type="BioGRID" id="109956">
    <property type="interactions" value="18"/>
</dbReference>
<dbReference type="CORUM" id="Q9H3M0"/>
<dbReference type="FunCoup" id="Q9H3M0">
    <property type="interactions" value="66"/>
</dbReference>
<dbReference type="IntAct" id="Q9H3M0">
    <property type="interactions" value="15"/>
</dbReference>
<dbReference type="STRING" id="9606.ENSP00000295082"/>
<dbReference type="ChEMBL" id="CHEMBL2362996"/>
<dbReference type="DrugBank" id="DB00228">
    <property type="generic name" value="Enflurane"/>
</dbReference>
<dbReference type="DrugBank" id="DB01110">
    <property type="generic name" value="Miconazole"/>
</dbReference>
<dbReference type="DrugBank" id="DB01069">
    <property type="generic name" value="Promethazine"/>
</dbReference>
<dbReference type="DrugCentral" id="Q9H3M0"/>
<dbReference type="TCDB" id="1.A.1.2.18">
    <property type="family name" value="the voltage-gated ion channel (vic) superfamily"/>
</dbReference>
<dbReference type="iPTMnet" id="Q9H3M0"/>
<dbReference type="PhosphoSitePlus" id="Q9H3M0"/>
<dbReference type="BioMuta" id="KCNF1"/>
<dbReference type="DMDM" id="24418476"/>
<dbReference type="jPOST" id="Q9H3M0"/>
<dbReference type="MassIVE" id="Q9H3M0"/>
<dbReference type="PaxDb" id="9606-ENSP00000295082"/>
<dbReference type="PeptideAtlas" id="Q9H3M0"/>
<dbReference type="Antibodypedia" id="2904">
    <property type="antibodies" value="159 antibodies from 27 providers"/>
</dbReference>
<dbReference type="DNASU" id="3754"/>
<dbReference type="Ensembl" id="ENST00000295082.3">
    <property type="protein sequence ID" value="ENSP00000295082.1"/>
    <property type="gene ID" value="ENSG00000162975.5"/>
</dbReference>
<dbReference type="GeneID" id="3754"/>
<dbReference type="KEGG" id="hsa:3754"/>
<dbReference type="MANE-Select" id="ENST00000295082.3">
    <property type="protein sequence ID" value="ENSP00000295082.1"/>
    <property type="RefSeq nucleotide sequence ID" value="NM_002236.5"/>
    <property type="RefSeq protein sequence ID" value="NP_002227.2"/>
</dbReference>
<dbReference type="UCSC" id="uc002rax.3">
    <property type="organism name" value="human"/>
</dbReference>
<dbReference type="AGR" id="HGNC:6246"/>
<dbReference type="CTD" id="3754"/>
<dbReference type="DisGeNET" id="3754"/>
<dbReference type="GeneCards" id="KCNF1"/>
<dbReference type="HGNC" id="HGNC:6246">
    <property type="gene designation" value="KCNF1"/>
</dbReference>
<dbReference type="HPA" id="ENSG00000162975">
    <property type="expression patterns" value="Group enriched (brain, choroid plexus)"/>
</dbReference>
<dbReference type="MalaCards" id="KCNF1"/>
<dbReference type="MIM" id="603787">
    <property type="type" value="gene"/>
</dbReference>
<dbReference type="neXtProt" id="NX_Q9H3M0"/>
<dbReference type="OpenTargets" id="ENSG00000162975"/>
<dbReference type="PharmGKB" id="PA30033"/>
<dbReference type="VEuPathDB" id="HostDB:ENSG00000162975"/>
<dbReference type="eggNOG" id="KOG3713">
    <property type="taxonomic scope" value="Eukaryota"/>
</dbReference>
<dbReference type="GeneTree" id="ENSGT00940000160213"/>
<dbReference type="HOGENOM" id="CLU_011722_4_1_1"/>
<dbReference type="InParanoid" id="Q9H3M0"/>
<dbReference type="OMA" id="FKCIIDV"/>
<dbReference type="OrthoDB" id="296522at2759"/>
<dbReference type="PAN-GO" id="Q9H3M0">
    <property type="GO annotations" value="4 GO annotations based on evolutionary models"/>
</dbReference>
<dbReference type="PhylomeDB" id="Q9H3M0"/>
<dbReference type="TreeFam" id="TF313103"/>
<dbReference type="PathwayCommons" id="Q9H3M0"/>
<dbReference type="Reactome" id="R-HSA-1296072">
    <property type="pathway name" value="Voltage gated Potassium channels"/>
</dbReference>
<dbReference type="SignaLink" id="Q9H3M0"/>
<dbReference type="BioGRID-ORCS" id="3754">
    <property type="hits" value="12 hits in 1142 CRISPR screens"/>
</dbReference>
<dbReference type="ChiTaRS" id="KCNF1">
    <property type="organism name" value="human"/>
</dbReference>
<dbReference type="GeneWiki" id="KCNF1"/>
<dbReference type="GenomeRNAi" id="3754"/>
<dbReference type="Pharos" id="Q9H3M0">
    <property type="development level" value="Tclin"/>
</dbReference>
<dbReference type="PRO" id="PR:Q9H3M0"/>
<dbReference type="Proteomes" id="UP000005640">
    <property type="component" value="Chromosome 2"/>
</dbReference>
<dbReference type="RNAct" id="Q9H3M0">
    <property type="molecule type" value="protein"/>
</dbReference>
<dbReference type="Bgee" id="ENSG00000162975">
    <property type="expression patterns" value="Expressed in prefrontal cortex and 111 other cell types or tissues"/>
</dbReference>
<dbReference type="GO" id="GO:0097546">
    <property type="term" value="C:ciliary base"/>
    <property type="evidence" value="ECO:0007669"/>
    <property type="project" value="Ensembl"/>
</dbReference>
<dbReference type="GO" id="GO:0016020">
    <property type="term" value="C:membrane"/>
    <property type="evidence" value="ECO:0000318"/>
    <property type="project" value="GO_Central"/>
</dbReference>
<dbReference type="GO" id="GO:0005886">
    <property type="term" value="C:plasma membrane"/>
    <property type="evidence" value="ECO:0000304"/>
    <property type="project" value="Reactome"/>
</dbReference>
<dbReference type="GO" id="GO:0008076">
    <property type="term" value="C:voltage-gated potassium channel complex"/>
    <property type="evidence" value="ECO:0000250"/>
    <property type="project" value="UniProtKB"/>
</dbReference>
<dbReference type="GO" id="GO:0015459">
    <property type="term" value="F:potassium channel regulator activity"/>
    <property type="evidence" value="ECO:0000250"/>
    <property type="project" value="UniProtKB"/>
</dbReference>
<dbReference type="GO" id="GO:0005249">
    <property type="term" value="F:voltage-gated potassium channel activity"/>
    <property type="evidence" value="ECO:0007669"/>
    <property type="project" value="InterPro"/>
</dbReference>
<dbReference type="GO" id="GO:0001508">
    <property type="term" value="P:action potential"/>
    <property type="evidence" value="ECO:0000318"/>
    <property type="project" value="GO_Central"/>
</dbReference>
<dbReference type="GO" id="GO:1905515">
    <property type="term" value="P:non-motile cilium assembly"/>
    <property type="evidence" value="ECO:0007669"/>
    <property type="project" value="Ensembl"/>
</dbReference>
<dbReference type="GO" id="GO:0071805">
    <property type="term" value="P:potassium ion transmembrane transport"/>
    <property type="evidence" value="ECO:0000318"/>
    <property type="project" value="GO_Central"/>
</dbReference>
<dbReference type="GO" id="GO:0006813">
    <property type="term" value="P:potassium ion transport"/>
    <property type="evidence" value="ECO:0000250"/>
    <property type="project" value="UniProtKB"/>
</dbReference>
<dbReference type="GO" id="GO:0051260">
    <property type="term" value="P:protein homooligomerization"/>
    <property type="evidence" value="ECO:0007669"/>
    <property type="project" value="InterPro"/>
</dbReference>
<dbReference type="GO" id="GO:0043266">
    <property type="term" value="P:regulation of potassium ion transport"/>
    <property type="evidence" value="ECO:0007669"/>
    <property type="project" value="Ensembl"/>
</dbReference>
<dbReference type="CDD" id="cd18381">
    <property type="entry name" value="BTB_POZ_Kv5_KCNF1"/>
    <property type="match status" value="1"/>
</dbReference>
<dbReference type="FunFam" id="1.20.120.350:FF:000046">
    <property type="entry name" value="Potassium voltage-gated channel subfamily F member 1"/>
    <property type="match status" value="1"/>
</dbReference>
<dbReference type="FunFam" id="3.30.710.10:FF:000072">
    <property type="entry name" value="Potassium voltage-gated channel subfamily F member 1"/>
    <property type="match status" value="1"/>
</dbReference>
<dbReference type="FunFam" id="1.10.287.70:FF:000005">
    <property type="entry name" value="potassium voltage-gated channel subfamily G member 1"/>
    <property type="match status" value="1"/>
</dbReference>
<dbReference type="Gene3D" id="1.10.287.70">
    <property type="match status" value="1"/>
</dbReference>
<dbReference type="Gene3D" id="3.30.710.10">
    <property type="entry name" value="Potassium Channel Kv1.1, Chain A"/>
    <property type="match status" value="1"/>
</dbReference>
<dbReference type="Gene3D" id="1.20.120.350">
    <property type="entry name" value="Voltage-gated potassium channels. Chain C"/>
    <property type="match status" value="1"/>
</dbReference>
<dbReference type="InterPro" id="IPR005821">
    <property type="entry name" value="Ion_trans_dom"/>
</dbReference>
<dbReference type="InterPro" id="IPR003968">
    <property type="entry name" value="K_chnl_volt-dep_Kv"/>
</dbReference>
<dbReference type="InterPro" id="IPR003971">
    <property type="entry name" value="K_chnl_volt-dep_Kv5/Kv9"/>
</dbReference>
<dbReference type="InterPro" id="IPR048010">
    <property type="entry name" value="KCNF1-like_BTB_POZ"/>
</dbReference>
<dbReference type="InterPro" id="IPR011333">
    <property type="entry name" value="SKP1/BTB/POZ_sf"/>
</dbReference>
<dbReference type="InterPro" id="IPR003131">
    <property type="entry name" value="T1-type_BTB"/>
</dbReference>
<dbReference type="InterPro" id="IPR028325">
    <property type="entry name" value="VG_K_chnl"/>
</dbReference>
<dbReference type="InterPro" id="IPR027359">
    <property type="entry name" value="Volt_channel_dom_sf"/>
</dbReference>
<dbReference type="PANTHER" id="PTHR11537:SF171">
    <property type="entry name" value="POTASSIUM VOLTAGE-GATED CHANNEL SUBFAMILY F MEMBER 1"/>
    <property type="match status" value="1"/>
</dbReference>
<dbReference type="PANTHER" id="PTHR11537">
    <property type="entry name" value="VOLTAGE-GATED POTASSIUM CHANNEL"/>
    <property type="match status" value="1"/>
</dbReference>
<dbReference type="Pfam" id="PF02214">
    <property type="entry name" value="BTB_2"/>
    <property type="match status" value="1"/>
</dbReference>
<dbReference type="Pfam" id="PF00520">
    <property type="entry name" value="Ion_trans"/>
    <property type="match status" value="1"/>
</dbReference>
<dbReference type="PRINTS" id="PR00169">
    <property type="entry name" value="KCHANNEL"/>
</dbReference>
<dbReference type="PRINTS" id="PR01494">
    <property type="entry name" value="KV9CHANNEL"/>
</dbReference>
<dbReference type="PRINTS" id="PR01491">
    <property type="entry name" value="KVCHANNEL"/>
</dbReference>
<dbReference type="SUPFAM" id="SSF54695">
    <property type="entry name" value="POZ domain"/>
    <property type="match status" value="1"/>
</dbReference>
<dbReference type="SUPFAM" id="SSF81324">
    <property type="entry name" value="Voltage-gated potassium channels"/>
    <property type="match status" value="1"/>
</dbReference>
<keyword id="KW-1003">Cell membrane</keyword>
<keyword id="KW-0407">Ion channel</keyword>
<keyword id="KW-0406">Ion transport</keyword>
<keyword id="KW-0472">Membrane</keyword>
<keyword id="KW-0630">Potassium</keyword>
<keyword id="KW-0631">Potassium channel</keyword>
<keyword id="KW-0633">Potassium transport</keyword>
<keyword id="KW-1267">Proteomics identification</keyword>
<keyword id="KW-1185">Reference proteome</keyword>
<keyword id="KW-0812">Transmembrane</keyword>
<keyword id="KW-1133">Transmembrane helix</keyword>
<keyword id="KW-0813">Transport</keyword>
<keyword id="KW-0851">Voltage-gated channel</keyword>
<feature type="chain" id="PRO_0000054072" description="Voltage-gated potassium channel regulatory subunit KCNF1">
    <location>
        <begin position="1"/>
        <end position="494"/>
    </location>
</feature>
<feature type="topological domain" description="Cytoplasmic" evidence="4">
    <location>
        <begin position="1"/>
        <end position="183"/>
    </location>
</feature>
<feature type="transmembrane region" description="Helical; Name=Segment S1" evidence="4">
    <location>
        <begin position="184"/>
        <end position="204"/>
    </location>
</feature>
<feature type="transmembrane region" description="Helical; Name=Segment S2" evidence="4">
    <location>
        <begin position="224"/>
        <end position="244"/>
    </location>
</feature>
<feature type="topological domain" description="Cytoplasmic" evidence="4">
    <location>
        <begin position="245"/>
        <end position="249"/>
    </location>
</feature>
<feature type="transmembrane region" description="Helical; Name=Segment S3" evidence="4">
    <location>
        <begin position="250"/>
        <end position="270"/>
    </location>
</feature>
<feature type="transmembrane region" description="Helical; Voltage-sensor; Name=Segment S4" evidence="4">
    <location>
        <begin position="290"/>
        <end position="310"/>
    </location>
</feature>
<feature type="topological domain" description="Cytoplasmic" evidence="4">
    <location>
        <begin position="311"/>
        <end position="324"/>
    </location>
</feature>
<feature type="transmembrane region" description="Helical; Name=Segment S5" evidence="4">
    <location>
        <begin position="325"/>
        <end position="345"/>
    </location>
</feature>
<feature type="intramembrane region" description="Pore-forming; Name=Segment H5" evidence="4">
    <location>
        <begin position="358"/>
        <end position="378"/>
    </location>
</feature>
<feature type="transmembrane region" description="Helical; Name=Segment S6" evidence="4">
    <location>
        <begin position="386"/>
        <end position="406"/>
    </location>
</feature>
<feature type="topological domain" description="Cytoplasmic" evidence="4">
    <location>
        <begin position="407"/>
        <end position="494"/>
    </location>
</feature>
<feature type="region of interest" description="Disordered" evidence="5">
    <location>
        <begin position="433"/>
        <end position="469"/>
    </location>
</feature>
<feature type="short sequence motif" description="Selectivity filter" evidence="2">
    <location>
        <begin position="370"/>
        <end position="375"/>
    </location>
</feature>
<feature type="sequence conflict" description="In Ref. 1; AAC05597." evidence="6" ref="1">
    <original>V</original>
    <variation>E</variation>
    <location>
        <position position="186"/>
    </location>
</feature>
<feature type="sequence conflict" description="In Ref. 1; AAC05597." evidence="6" ref="1">
    <original>G</original>
    <variation>D</variation>
    <location>
        <position position="202"/>
    </location>
</feature>
<feature type="sequence conflict" description="In Ref. 1; AAC05597." evidence="6" ref="1">
    <original>S</original>
    <variation>N</variation>
    <location>
        <position position="356"/>
    </location>
</feature>
<feature type="sequence conflict" description="In Ref. 1; AAC05597." evidence="6" ref="1">
    <original>G</original>
    <variation>S</variation>
    <location>
        <position position="383"/>
    </location>
</feature>
<name>KCNF1_HUMAN</name>
<evidence type="ECO:0000250" key="1">
    <source>
        <dbReference type="UniProtKB" id="D4ADX7"/>
    </source>
</evidence>
<evidence type="ECO:0000250" key="2">
    <source>
        <dbReference type="UniProtKB" id="P63142"/>
    </source>
</evidence>
<evidence type="ECO:0000250" key="3">
    <source>
        <dbReference type="UniProtKB" id="Q14721"/>
    </source>
</evidence>
<evidence type="ECO:0000255" key="4"/>
<evidence type="ECO:0000256" key="5">
    <source>
        <dbReference type="SAM" id="MobiDB-lite"/>
    </source>
</evidence>
<evidence type="ECO:0000305" key="6"/>
<evidence type="ECO:0000312" key="7">
    <source>
        <dbReference type="HGNC" id="HGNC:6246"/>
    </source>
</evidence>
<organism>
    <name type="scientific">Homo sapiens</name>
    <name type="common">Human</name>
    <dbReference type="NCBI Taxonomy" id="9606"/>
    <lineage>
        <taxon>Eukaryota</taxon>
        <taxon>Metazoa</taxon>
        <taxon>Chordata</taxon>
        <taxon>Craniata</taxon>
        <taxon>Vertebrata</taxon>
        <taxon>Euteleostomi</taxon>
        <taxon>Mammalia</taxon>
        <taxon>Eutheria</taxon>
        <taxon>Euarchontoglires</taxon>
        <taxon>Primates</taxon>
        <taxon>Haplorrhini</taxon>
        <taxon>Catarrhini</taxon>
        <taxon>Hominidae</taxon>
        <taxon>Homo</taxon>
    </lineage>
</organism>
<accession>Q9H3M0</accession>
<accession>O43527</accession>
<accession>Q585L3</accession>
<proteinExistence type="evidence at protein level"/>
<comment type="function">
    <text evidence="1">Regulatory alpha-subunit of the voltage-gated potassium (Kv) channel which, when coassembled with KCNB1 or KCNB2, can modulate their expression and their gating kinetics by acting on deactivation upon repolarization and inactivation during maintained depolarization. Accelerates inactivation but has relatively little effect on deactivation. Coexpression with KCNB1 or KCNB2 markedly slows inactivation. Each modulatory subunit has its own specific properties of regulation, and can lead to extensive inhibitions, to large changes in kinetics, and/or to large shifts in the voltage dependencies of the inactivation process. The gating kinetics depends on the nature and stoichiometry of the associated regulatory sunbunit. Fails to produce a potassium current when expressed alone.</text>
</comment>
<comment type="subunit">
    <text evidence="1">Heterotetramer with KCNB1 or KCNB2.</text>
</comment>
<comment type="interaction">
    <interactant intactId="EBI-6918743">
        <id>Q9H3M0</id>
    </interactant>
    <interactant intactId="EBI-12150557">
        <id>O15296</id>
        <label>ALOX15B</label>
    </interactant>
    <organismsDiffer>false</organismsDiffer>
    <experiments>3</experiments>
</comment>
<comment type="interaction">
    <interactant intactId="EBI-6918743">
        <id>Q9H3M0</id>
    </interactant>
    <interactant intactId="EBI-3216282">
        <id>Q96KA5</id>
        <label>CLPTM1L</label>
    </interactant>
    <organismsDiffer>false</organismsDiffer>
    <experiments>3</experiments>
</comment>
<comment type="interaction">
    <interactant intactId="EBI-6918743">
        <id>Q9H3M0</id>
    </interactant>
    <interactant intactId="EBI-2513774">
        <id>O95363</id>
        <label>FARS2</label>
    </interactant>
    <organismsDiffer>false</organismsDiffer>
    <experiments>3</experiments>
</comment>
<comment type="interaction">
    <interactant intactId="EBI-6918743">
        <id>Q9H3M0</id>
    </interactant>
    <interactant intactId="EBI-1003422">
        <id>Q07820</id>
        <label>MCL1</label>
    </interactant>
    <organismsDiffer>false</organismsDiffer>
    <experiments>3</experiments>
</comment>
<comment type="interaction">
    <interactant intactId="EBI-6918743">
        <id>Q9H3M0</id>
    </interactant>
    <interactant intactId="EBI-10329948">
        <id>Q9Y6X1</id>
        <label>SERP1</label>
    </interactant>
    <organismsDiffer>false</organismsDiffer>
    <experiments>4</experiments>
</comment>
<comment type="interaction">
    <interactant intactId="EBI-6918743">
        <id>Q9H3M0</id>
    </interactant>
    <interactant intactId="EBI-1051105">
        <id>Q92504</id>
        <label>SLC39A7</label>
    </interactant>
    <organismsDiffer>false</organismsDiffer>
    <experiments>3</experiments>
</comment>
<comment type="interaction">
    <interactant intactId="EBI-6918743">
        <id>Q9H3M0</id>
    </interactant>
    <interactant intactId="EBI-710310">
        <id>Q15560</id>
        <label>TCEA2</label>
    </interactant>
    <organismsDiffer>false</organismsDiffer>
    <experiments>3</experiments>
</comment>
<comment type="interaction">
    <interactant intactId="EBI-6918743">
        <id>Q9H3M0</id>
    </interactant>
    <interactant intactId="EBI-6623146">
        <id>P30536</id>
        <label>TSPO</label>
    </interactant>
    <organismsDiffer>false</organismsDiffer>
    <experiments>3</experiments>
</comment>
<comment type="subcellular location">
    <subcellularLocation>
        <location evidence="3">Cell membrane</location>
        <topology evidence="4">Multi-pass membrane protein</topology>
    </subcellularLocation>
</comment>
<comment type="tissue specificity">
    <text>Detected in heart, brain, liver, skeletal muscle, kidney and pancreas.</text>
</comment>
<comment type="similarity">
    <text evidence="6">Belongs to the potassium channel family. F (TC 1.A.1.2) subfamily. Kv5.1/KCNF1 sub-subfamily.</text>
</comment>
<protein>
    <recommendedName>
        <fullName evidence="6">Voltage-gated potassium channel regulatory subunit KCNF1</fullName>
    </recommendedName>
    <alternativeName>
        <fullName>Potassium voltage-gated channel subfamily F member 1</fullName>
    </alternativeName>
    <alternativeName>
        <fullName>Voltage-gated potassium channel subunit Kv5.1</fullName>
    </alternativeName>
    <alternativeName>
        <fullName>kH1</fullName>
    </alternativeName>
</protein>